<proteinExistence type="inferred from homology"/>
<sequence>MYRLAAFDMDGTLLMRDHKIGSITLNALHQLADAGVTLTFATGRHYLDMKGILSHSGLNGYLITGNGTRVCDAEGNPLYGMDLPAELVEFVLRTPWQTNASIHLFRDDGWFTDRNDPDLLIAHTTSGFHFQLTEWDELPLTGNHKFCFIASHQELVELKAQLEQQMSGEADFCFSATDCLEVLPRGCNKGVALEKLSHHLDLTLADCMAFGDAMNDKEMLSRVGRGLVMGNALPQLKQELPQLQIIGRCEQQGVAHYLHHWLSSPHLTYSPEF</sequence>
<organism>
    <name type="scientific">Yersinia pseudotuberculosis serotype O:1b (strain IP 31758)</name>
    <dbReference type="NCBI Taxonomy" id="349747"/>
    <lineage>
        <taxon>Bacteria</taxon>
        <taxon>Pseudomonadati</taxon>
        <taxon>Pseudomonadota</taxon>
        <taxon>Gammaproteobacteria</taxon>
        <taxon>Enterobacterales</taxon>
        <taxon>Yersiniaceae</taxon>
        <taxon>Yersinia</taxon>
    </lineage>
</organism>
<gene>
    <name evidence="1" type="primary">cof</name>
    <name type="ordered locus">YpsIP31758_3083</name>
</gene>
<evidence type="ECO:0000255" key="1">
    <source>
        <dbReference type="HAMAP-Rule" id="MF_01847"/>
    </source>
</evidence>
<keyword id="KW-0378">Hydrolase</keyword>
<keyword id="KW-0460">Magnesium</keyword>
<keyword id="KW-0479">Metal-binding</keyword>
<protein>
    <recommendedName>
        <fullName evidence="1">HMP-PP phosphatase</fullName>
        <ecNumber evidence="1">3.6.1.-</ecNumber>
    </recommendedName>
</protein>
<comment type="function">
    <text evidence="1">Catalyzes the hydrolysis of 4-amino-2-methyl-5-hydroxymethylpyrimidine pyrophosphate (HMP-PP) to 4-amino-2-methyl-5-hydroxymethylpyrimidine phosphate (HMP-P).</text>
</comment>
<comment type="catalytic activity">
    <reaction evidence="1">
        <text>4-amino-2-methyl-5-(diphosphooxymethyl)pyrimidine + H2O = 4-amino-2-methyl-5-(phosphooxymethyl)pyrimidine + phosphate + H(+)</text>
        <dbReference type="Rhea" id="RHEA:27914"/>
        <dbReference type="ChEBI" id="CHEBI:15377"/>
        <dbReference type="ChEBI" id="CHEBI:15378"/>
        <dbReference type="ChEBI" id="CHEBI:43474"/>
        <dbReference type="ChEBI" id="CHEBI:57841"/>
        <dbReference type="ChEBI" id="CHEBI:58354"/>
    </reaction>
</comment>
<comment type="cofactor">
    <cofactor evidence="1">
        <name>Mg(2+)</name>
        <dbReference type="ChEBI" id="CHEBI:18420"/>
    </cofactor>
</comment>
<comment type="similarity">
    <text evidence="1">Belongs to the HAD-like hydrolase superfamily. Cof family.</text>
</comment>
<name>COF_YERP3</name>
<accession>A7FLB5</accession>
<reference key="1">
    <citation type="journal article" date="2007" name="PLoS Genet.">
        <title>The complete genome sequence of Yersinia pseudotuberculosis IP31758, the causative agent of Far East scarlet-like fever.</title>
        <authorList>
            <person name="Eppinger M."/>
            <person name="Rosovitz M.J."/>
            <person name="Fricke W.F."/>
            <person name="Rasko D.A."/>
            <person name="Kokorina G."/>
            <person name="Fayolle C."/>
            <person name="Lindler L.E."/>
            <person name="Carniel E."/>
            <person name="Ravel J."/>
        </authorList>
    </citation>
    <scope>NUCLEOTIDE SEQUENCE [LARGE SCALE GENOMIC DNA]</scope>
    <source>
        <strain>IP 31758</strain>
    </source>
</reference>
<dbReference type="EC" id="3.6.1.-" evidence="1"/>
<dbReference type="EMBL" id="CP000720">
    <property type="protein sequence ID" value="ABS49054.1"/>
    <property type="molecule type" value="Genomic_DNA"/>
</dbReference>
<dbReference type="RefSeq" id="WP_012105573.1">
    <property type="nucleotide sequence ID" value="NC_009708.1"/>
</dbReference>
<dbReference type="SMR" id="A7FLB5"/>
<dbReference type="KEGG" id="ypi:YpsIP31758_3083"/>
<dbReference type="HOGENOM" id="CLU_044146_5_2_6"/>
<dbReference type="Proteomes" id="UP000002412">
    <property type="component" value="Chromosome"/>
</dbReference>
<dbReference type="GO" id="GO:0002145">
    <property type="term" value="F:4-amino-5-hydroxymethyl-2-methylpyrimidine diphosphatase activity"/>
    <property type="evidence" value="ECO:0007669"/>
    <property type="project" value="RHEA"/>
</dbReference>
<dbReference type="GO" id="GO:0000287">
    <property type="term" value="F:magnesium ion binding"/>
    <property type="evidence" value="ECO:0000250"/>
    <property type="project" value="UniProtKB"/>
</dbReference>
<dbReference type="GO" id="GO:0016791">
    <property type="term" value="F:phosphatase activity"/>
    <property type="evidence" value="ECO:0000250"/>
    <property type="project" value="UniProtKB"/>
</dbReference>
<dbReference type="CDD" id="cd07516">
    <property type="entry name" value="HAD_Pase"/>
    <property type="match status" value="1"/>
</dbReference>
<dbReference type="FunFam" id="3.30.1240.10:FF:000018">
    <property type="entry name" value="HMP-PP phosphatase"/>
    <property type="match status" value="1"/>
</dbReference>
<dbReference type="Gene3D" id="3.30.1240.10">
    <property type="match status" value="1"/>
</dbReference>
<dbReference type="Gene3D" id="3.40.50.1000">
    <property type="entry name" value="HAD superfamily/HAD-like"/>
    <property type="match status" value="1"/>
</dbReference>
<dbReference type="HAMAP" id="MF_01847">
    <property type="entry name" value="HMP_PP_phosphat"/>
    <property type="match status" value="1"/>
</dbReference>
<dbReference type="InterPro" id="IPR000150">
    <property type="entry name" value="Cof"/>
</dbReference>
<dbReference type="InterPro" id="IPR036412">
    <property type="entry name" value="HAD-like_sf"/>
</dbReference>
<dbReference type="InterPro" id="IPR006379">
    <property type="entry name" value="HAD-SF_hydro_IIB"/>
</dbReference>
<dbReference type="InterPro" id="IPR023214">
    <property type="entry name" value="HAD_sf"/>
</dbReference>
<dbReference type="InterPro" id="IPR023938">
    <property type="entry name" value="HMP-PP_phosphatase"/>
</dbReference>
<dbReference type="NCBIfam" id="TIGR00099">
    <property type="entry name" value="Cof-subfamily"/>
    <property type="match status" value="1"/>
</dbReference>
<dbReference type="NCBIfam" id="TIGR01484">
    <property type="entry name" value="HAD-SF-IIB"/>
    <property type="match status" value="1"/>
</dbReference>
<dbReference type="NCBIfam" id="NF011705">
    <property type="entry name" value="PRK15126.1"/>
    <property type="match status" value="1"/>
</dbReference>
<dbReference type="PANTHER" id="PTHR47267">
    <property type="match status" value="1"/>
</dbReference>
<dbReference type="PANTHER" id="PTHR47267:SF2">
    <property type="entry name" value="HMP-PP PHOSPHATASE"/>
    <property type="match status" value="1"/>
</dbReference>
<dbReference type="Pfam" id="PF08282">
    <property type="entry name" value="Hydrolase_3"/>
    <property type="match status" value="1"/>
</dbReference>
<dbReference type="SFLD" id="SFLDG01140">
    <property type="entry name" value="C2.B:_Phosphomannomutase_and_P"/>
    <property type="match status" value="1"/>
</dbReference>
<dbReference type="SFLD" id="SFLDS00003">
    <property type="entry name" value="Haloacid_Dehalogenase"/>
    <property type="match status" value="1"/>
</dbReference>
<dbReference type="SUPFAM" id="SSF56784">
    <property type="entry name" value="HAD-like"/>
    <property type="match status" value="1"/>
</dbReference>
<dbReference type="PROSITE" id="PS01228">
    <property type="entry name" value="COF_1"/>
    <property type="match status" value="1"/>
</dbReference>
<dbReference type="PROSITE" id="PS01229">
    <property type="entry name" value="COF_2"/>
    <property type="match status" value="1"/>
</dbReference>
<feature type="chain" id="PRO_0000343006" description="HMP-PP phosphatase">
    <location>
        <begin position="1"/>
        <end position="273"/>
    </location>
</feature>
<feature type="active site" description="Nucleophile" evidence="1">
    <location>
        <position position="8"/>
    </location>
</feature>
<feature type="binding site" evidence="1">
    <location>
        <position position="8"/>
    </location>
    <ligand>
        <name>Mg(2+)</name>
        <dbReference type="ChEBI" id="CHEBI:18420"/>
    </ligand>
</feature>
<feature type="binding site" evidence="1">
    <location>
        <position position="10"/>
    </location>
    <ligand>
        <name>Mg(2+)</name>
        <dbReference type="ChEBI" id="CHEBI:18420"/>
    </ligand>
</feature>
<feature type="binding site" evidence="1">
    <location>
        <position position="212"/>
    </location>
    <ligand>
        <name>Mg(2+)</name>
        <dbReference type="ChEBI" id="CHEBI:18420"/>
    </ligand>
</feature>